<accession>Q8I659</accession>
<accession>A0A143ZXF2</accession>
<accession>A0A143ZXS2</accession>
<comment type="function">
    <text evidence="1">Involved in cytoplasm to vacuole transport (Cvt), pexophagy, mitophagy and nucleophagy. Works as scaffold proteins that recruit ATG proteins to the pre-autophagosome (PAS), the site of vesicle/autophagosome formation.</text>
</comment>
<comment type="alternative products">
    <event type="alternative splicing"/>
    <isoform>
        <id>Q8I659-1</id>
        <name>1</name>
        <sequence type="displayed"/>
    </isoform>
    <isoform>
        <id>Q8I659-2</id>
        <name>2</name>
        <sequence type="described" ref="VSP_061363"/>
    </isoform>
</comment>
<comment type="biotechnology">
    <text evidence="4">Possible candidate for an effective malaria vaccine as determined by epitope response in sera.</text>
</comment>
<comment type="similarity">
    <text evidence="5">Belongs to the ATG11 family.</text>
</comment>
<evidence type="ECO:0000250" key="1">
    <source>
        <dbReference type="UniProtKB" id="Q12527"/>
    </source>
</evidence>
<evidence type="ECO:0000255" key="2"/>
<evidence type="ECO:0000256" key="3">
    <source>
        <dbReference type="SAM" id="MobiDB-lite"/>
    </source>
</evidence>
<evidence type="ECO:0000269" key="4">
    <source>
    </source>
</evidence>
<evidence type="ECO:0000305" key="5"/>
<gene>
    <name evidence="5" type="primary">ATG11</name>
    <name type="ORF">PF3D7_0216700.1</name>
    <name type="ORF">PFB0765w</name>
</gene>
<keyword id="KW-0025">Alternative splicing</keyword>
<keyword id="KW-0175">Coiled coil</keyword>
<keyword id="KW-0477">Merozoite</keyword>
<keyword id="KW-1185">Reference proteome</keyword>
<feature type="chain" id="PRO_0000388764" description="Putative autophagy-related protein 11">
    <location>
        <begin position="1"/>
        <end position="1383"/>
    </location>
</feature>
<feature type="region of interest" description="Disordered" evidence="3">
    <location>
        <begin position="1151"/>
        <end position="1249"/>
    </location>
</feature>
<feature type="coiled-coil region" evidence="2">
    <location>
        <begin position="16"/>
        <end position="49"/>
    </location>
</feature>
<feature type="coiled-coil region" evidence="2">
    <location>
        <begin position="117"/>
        <end position="324"/>
    </location>
</feature>
<feature type="compositionally biased region" description="Basic and acidic residues" evidence="3">
    <location>
        <begin position="1151"/>
        <end position="1224"/>
    </location>
</feature>
<feature type="compositionally biased region" description="Basic and acidic residues" evidence="3">
    <location>
        <begin position="1233"/>
        <end position="1249"/>
    </location>
</feature>
<feature type="splice variant" id="VSP_061363" description="In isoform 2." evidence="5">
    <location>
        <begin position="146"/>
        <end position="151"/>
    </location>
</feature>
<reference key="1">
    <citation type="journal article" date="1998" name="Science">
        <title>Chromosome 2 sequence of the human malaria parasite Plasmodium falciparum.</title>
        <authorList>
            <person name="Gardner M.J."/>
            <person name="Tettelin H."/>
            <person name="Carucci D.J."/>
            <person name="Cummings L.M."/>
            <person name="Aravind L."/>
            <person name="Koonin E.V."/>
            <person name="Shallom S.J."/>
            <person name="Mason T."/>
            <person name="Yu K."/>
            <person name="Fujii C."/>
            <person name="Pederson J."/>
            <person name="Shen K."/>
            <person name="Jing J."/>
            <person name="Aston C."/>
            <person name="Lai Z."/>
            <person name="Schwartz D.C."/>
            <person name="Pertea M."/>
            <person name="Salzberg S.L."/>
            <person name="Zhou L."/>
            <person name="Sutton G.G."/>
            <person name="Clayton R."/>
            <person name="White O."/>
            <person name="Smith H.O."/>
            <person name="Fraser C.M."/>
            <person name="Adams M.D."/>
            <person name="Venter J.C."/>
            <person name="Hoffman S.L."/>
        </authorList>
    </citation>
    <scope>NUCLEOTIDE SEQUENCE [LARGE SCALE GENOMIC DNA]</scope>
    <source>
        <strain>3D7</strain>
    </source>
</reference>
<reference key="2">
    <citation type="journal article" date="2002" name="Nature">
        <title>Genome sequence of the human malaria parasite Plasmodium falciparum.</title>
        <authorList>
            <person name="Gardner M.J."/>
            <person name="Hall N."/>
            <person name="Fung E."/>
            <person name="White O."/>
            <person name="Berriman M."/>
            <person name="Hyman R.W."/>
            <person name="Carlton J.M."/>
            <person name="Pain A."/>
            <person name="Nelson K.E."/>
            <person name="Bowman S."/>
            <person name="Paulsen I.T."/>
            <person name="James K.D."/>
            <person name="Eisen J.A."/>
            <person name="Rutherford K.M."/>
            <person name="Salzberg S.L."/>
            <person name="Craig A."/>
            <person name="Kyes S."/>
            <person name="Chan M.-S."/>
            <person name="Nene V."/>
            <person name="Shallom S.J."/>
            <person name="Suh B."/>
            <person name="Peterson J."/>
            <person name="Angiuoli S."/>
            <person name="Pertea M."/>
            <person name="Allen J."/>
            <person name="Selengut J."/>
            <person name="Haft D."/>
            <person name="Mather M.W."/>
            <person name="Vaidya A.B."/>
            <person name="Martin D.M.A."/>
            <person name="Fairlamb A.H."/>
            <person name="Fraunholz M.J."/>
            <person name="Roos D.S."/>
            <person name="Ralph S.A."/>
            <person name="McFadden G.I."/>
            <person name="Cummings L.M."/>
            <person name="Subramanian G.M."/>
            <person name="Mungall C."/>
            <person name="Venter J.C."/>
            <person name="Carucci D.J."/>
            <person name="Hoffman S.L."/>
            <person name="Newbold C."/>
            <person name="Davis R.W."/>
            <person name="Fraser C.M."/>
            <person name="Barrell B.G."/>
        </authorList>
    </citation>
    <scope>NUCLEOTIDE SEQUENCE [LARGE SCALE GENOMIC DNA]</scope>
    <source>
        <strain>3D7</strain>
    </source>
</reference>
<reference evidence="5" key="3">
    <citation type="journal article" date="2007" name="PLoS ONE">
        <title>Rapid identification of malaria vaccine candidates based on alpha-helical coiled coil protein motif.</title>
        <authorList>
            <person name="Villard V."/>
            <person name="Agak G.W."/>
            <person name="Frank G."/>
            <person name="Jafarshad A."/>
            <person name="Servis C."/>
            <person name="Nebie I."/>
            <person name="Sirima S.B."/>
            <person name="Felger I."/>
            <person name="Arevalo-Herrera M."/>
            <person name="Herrera S."/>
            <person name="Heitz F."/>
            <person name="Baecker V."/>
            <person name="Druilhe P."/>
            <person name="Kajava A.V."/>
            <person name="Corradin G."/>
        </authorList>
    </citation>
    <scope>SYNTHESIS OF 515-556 AND 605-633</scope>
    <scope>POSSIBLE CANDIDATE MALARIA EPITOPE</scope>
</reference>
<protein>
    <recommendedName>
        <fullName evidence="5">Putative autophagy-related protein 11</fullName>
    </recommendedName>
</protein>
<sequence length="1383" mass="167008">MVILGDEKESYTSYCDKNNDILISKQKIEDLKKSIENLLNDKNAHYELNHIKRSLNELDIYTKNKSDLFNNYNLNESLNDSYKDKTFEELKSQLIKQKNLNSCLSLKLKSIHIKLNNLFLKKNEFEKTINNKIKEIELQFLIIQNVTHENKGIPISKELKEQEKHLQNSHENVAIYDTHEIENNDKKKLYTNFHNEEKDHLKCLLEEYSKTLEIYKMGKIQLEFELKCCKEKLNEEIEKNNNYNNKMKSYEIHIDVVKNENCKNLEELNDLKLQLEKTKSENNQNYVKNKILNDEKNNLDKINNDLKIKIKNFKTLLNDAQNKEYILNNFTQKIFNIITYLKNNDEHNFLNDKIHNKLDINQDQIYVQTELYIDIISSSIRNLINFKKTLEERNVELEKVTHEMKELRKELILKKKNYEELRLKLNHLECVERDSVKINSEKEKGEKVIYELKEKLDNDEKIINDLKKKNSYQVYKMKDYEKRENNLINEINKLKLFIEENKMTVERGNEMNNKKLEEMKQKNKELINNLNDISDELKNCIEQVNSVSRNMANVEKEKENIINELQILRMKNDTMRKRISKFVEQEKVLKFKLYTLNNDIFSKNEKLNDMQKKLNDVNEKYKNIVECLNNYKTEHKEQIEKKIERINTLKQNYYYLKKEYDLKNKELEKNIEHGKKLEHELSHCYEENQKLNEEIKRRNSFIKNKDRKIDLLTNIENELLKKKEINNIKLMEKQNVIKNNEQLLKDIKDENEKMNEHVNKLQNELIKRELQNKCISKDIEFCKKEKEDKIKNLEDDLLEKKKCIENLKDELINIKKKMEDKMHMTNEMDLLSNKVEELNRINKTYEKNIVELNNELDVIKKKLNDEEFLKEEEKKKNIDMVYKIKEYEIQIKEKENEIDSLKKNEQNLHVLKNEELNEKEIILKNKYDKEINMIIEQYNKKIQEEKDMLNNKIKSMDQTHKNQIEEMQEENKKELKRLKNVCDMNLQSQILIKENEKHMQEKVEEYKNLLKQKDQELKNIIQEYDERIEIQNKEMEDIVNDCEEKLKQAKINNKKLTTATNMANNNNMLMDENLKEKDKKINDLMKDMEKKKEEINKLVEEKSKLEHSHVKIQNEMSLLVEQNEKLKEEMGLSRIAIKDMEEIKKDMEKYEEEKKKNEEERKKNEEERKKNEEERKKNEEEKKKNEEERKKNEEEKKKLEKDKHQFEEEKERMEIYEHQKEDRKRKDKKKKGHSSDKEEKYNKKEKTKEKSSNILFDEEYIIQLEELRDTGENCFIYLKSLSKELDVIINKLKSKDDALLNDAFNKINLAITSWNIFNEENKEGDNITTVENTATEGNITIDENTTEVEMNNEEVYKIFSVEKYDMLKKEVGEKVECIQKLIG</sequence>
<dbReference type="EMBL" id="LN999943">
    <property type="protein sequence ID" value="CZT98180.1"/>
    <property type="molecule type" value="Genomic_DNA"/>
</dbReference>
<dbReference type="EMBL" id="LN999943">
    <property type="protein sequence ID" value="CZT98181.1"/>
    <property type="molecule type" value="Genomic_DNA"/>
</dbReference>
<dbReference type="PIR" id="E71606">
    <property type="entry name" value="E71606"/>
</dbReference>
<dbReference type="RefSeq" id="XP_001349671.1">
    <molecule id="Q8I659-1"/>
    <property type="nucleotide sequence ID" value="XM_001349635.1"/>
</dbReference>
<dbReference type="SMR" id="Q8I659"/>
<dbReference type="BioGRID" id="1208073">
    <property type="interactions" value="9"/>
</dbReference>
<dbReference type="IntAct" id="Q8I659">
    <property type="interactions" value="9"/>
</dbReference>
<dbReference type="STRING" id="36329.Q8I659"/>
<dbReference type="PaxDb" id="5833-PFB0765w"/>
<dbReference type="EnsemblProtists" id="CZT98180">
    <molecule id="Q8I659-1"/>
    <property type="protein sequence ID" value="CZT98180"/>
    <property type="gene ID" value="PF3D7_0216700.1"/>
</dbReference>
<dbReference type="EnsemblProtists" id="CZT98181">
    <molecule id="Q8I659-2"/>
    <property type="protein sequence ID" value="CZT98181"/>
    <property type="gene ID" value="PF3D7_0216700.2"/>
</dbReference>
<dbReference type="GeneID" id="812753"/>
<dbReference type="KEGG" id="pfa:PF3D7_0216700.1"/>
<dbReference type="VEuPathDB" id="PlasmoDB:PF3D7_0216700"/>
<dbReference type="HOGENOM" id="CLU_252908_0_0_1"/>
<dbReference type="InParanoid" id="Q8I659"/>
<dbReference type="OMA" id="VQTELYI"/>
<dbReference type="OrthoDB" id="372915at2759"/>
<dbReference type="PhylomeDB" id="Q8I659"/>
<dbReference type="Proteomes" id="UP000001450">
    <property type="component" value="Chromosome 2"/>
</dbReference>
<proteinExistence type="evidence at protein level"/>
<organism>
    <name type="scientific">Plasmodium falciparum (isolate 3D7)</name>
    <dbReference type="NCBI Taxonomy" id="36329"/>
    <lineage>
        <taxon>Eukaryota</taxon>
        <taxon>Sar</taxon>
        <taxon>Alveolata</taxon>
        <taxon>Apicomplexa</taxon>
        <taxon>Aconoidasida</taxon>
        <taxon>Haemosporida</taxon>
        <taxon>Plasmodiidae</taxon>
        <taxon>Plasmodium</taxon>
        <taxon>Plasmodium (Laverania)</taxon>
    </lineage>
</organism>
<name>ATG11_PLAF7</name>